<keyword id="KW-0963">Cytoplasm</keyword>
<keyword id="KW-0488">Methylation</keyword>
<keyword id="KW-0648">Protein biosynthesis</keyword>
<keyword id="KW-1185">Reference proteome</keyword>
<organism>
    <name type="scientific">Saccharophagus degradans (strain 2-40 / ATCC 43961 / DSM 17024)</name>
    <dbReference type="NCBI Taxonomy" id="203122"/>
    <lineage>
        <taxon>Bacteria</taxon>
        <taxon>Pseudomonadati</taxon>
        <taxon>Pseudomonadota</taxon>
        <taxon>Gammaproteobacteria</taxon>
        <taxon>Cellvibrionales</taxon>
        <taxon>Cellvibrionaceae</taxon>
        <taxon>Saccharophagus</taxon>
    </lineage>
</organism>
<gene>
    <name evidence="1" type="primary">prfA</name>
    <name type="ordered locus">Sde_3251</name>
</gene>
<sequence length="360" mass="39881">MKASILEKLEHLAERFTEVGALMGDPDVISNQDKFRDLGREYAELEPVIKCYNEYNTVLGNIAEAKVLISDSDPDMRAMGQDELKENEAALEPLELELQKLLLPKDPNDGKNVFLEIRAGTGGDEAAIFSGDLFRMYSRYAESKGWKVEIISENQGEHGGYKEIITRVVGQGVYSELKFESGAHRVQRVPETESQGRIHTSACTVAVMPEADEMAEVNINKADLRIDTFRASGAGGQHVNKTDSAIRLTHIPTGVVVECQDERSQHKNRAKAMSLLASRLSMAQEEKAAAEQASARKSLVGSGDRSERIRTYNFPQGRVTDHRINLTLYKLDEVMQGALGDVIQPLVNEYQADQLAALSE</sequence>
<feature type="chain" id="PRO_0000263343" description="Peptide chain release factor 1">
    <location>
        <begin position="1"/>
        <end position="360"/>
    </location>
</feature>
<feature type="modified residue" description="N5-methylglutamine" evidence="1">
    <location>
        <position position="237"/>
    </location>
</feature>
<dbReference type="EMBL" id="CP000282">
    <property type="protein sequence ID" value="ABD82506.1"/>
    <property type="molecule type" value="Genomic_DNA"/>
</dbReference>
<dbReference type="RefSeq" id="WP_011469722.1">
    <property type="nucleotide sequence ID" value="NC_007912.1"/>
</dbReference>
<dbReference type="SMR" id="Q21FM3"/>
<dbReference type="STRING" id="203122.Sde_3251"/>
<dbReference type="GeneID" id="98614872"/>
<dbReference type="KEGG" id="sde:Sde_3251"/>
<dbReference type="eggNOG" id="COG0216">
    <property type="taxonomic scope" value="Bacteria"/>
</dbReference>
<dbReference type="HOGENOM" id="CLU_036856_0_1_6"/>
<dbReference type="OrthoDB" id="9806673at2"/>
<dbReference type="Proteomes" id="UP000001947">
    <property type="component" value="Chromosome"/>
</dbReference>
<dbReference type="GO" id="GO:0005737">
    <property type="term" value="C:cytoplasm"/>
    <property type="evidence" value="ECO:0007669"/>
    <property type="project" value="UniProtKB-SubCell"/>
</dbReference>
<dbReference type="GO" id="GO:0016149">
    <property type="term" value="F:translation release factor activity, codon specific"/>
    <property type="evidence" value="ECO:0007669"/>
    <property type="project" value="UniProtKB-UniRule"/>
</dbReference>
<dbReference type="FunFam" id="3.30.160.20:FF:000004">
    <property type="entry name" value="Peptide chain release factor 1"/>
    <property type="match status" value="1"/>
</dbReference>
<dbReference type="FunFam" id="3.30.70.1660:FF:000002">
    <property type="entry name" value="Peptide chain release factor 1"/>
    <property type="match status" value="1"/>
</dbReference>
<dbReference type="FunFam" id="3.30.70.1660:FF:000004">
    <property type="entry name" value="Peptide chain release factor 1"/>
    <property type="match status" value="1"/>
</dbReference>
<dbReference type="Gene3D" id="3.30.160.20">
    <property type="match status" value="1"/>
</dbReference>
<dbReference type="Gene3D" id="3.30.70.1660">
    <property type="match status" value="2"/>
</dbReference>
<dbReference type="Gene3D" id="6.10.140.1950">
    <property type="match status" value="1"/>
</dbReference>
<dbReference type="HAMAP" id="MF_00093">
    <property type="entry name" value="Rel_fac_1"/>
    <property type="match status" value="1"/>
</dbReference>
<dbReference type="InterPro" id="IPR005139">
    <property type="entry name" value="PCRF"/>
</dbReference>
<dbReference type="InterPro" id="IPR000352">
    <property type="entry name" value="Pep_chain_release_fac_I"/>
</dbReference>
<dbReference type="InterPro" id="IPR045853">
    <property type="entry name" value="Pep_chain_release_fac_I_sf"/>
</dbReference>
<dbReference type="InterPro" id="IPR050057">
    <property type="entry name" value="Prokaryotic/Mito_RF"/>
</dbReference>
<dbReference type="InterPro" id="IPR004373">
    <property type="entry name" value="RF-1"/>
</dbReference>
<dbReference type="NCBIfam" id="TIGR00019">
    <property type="entry name" value="prfA"/>
    <property type="match status" value="1"/>
</dbReference>
<dbReference type="NCBIfam" id="NF001859">
    <property type="entry name" value="PRK00591.1"/>
    <property type="match status" value="1"/>
</dbReference>
<dbReference type="PANTHER" id="PTHR43804">
    <property type="entry name" value="LD18447P"/>
    <property type="match status" value="1"/>
</dbReference>
<dbReference type="PANTHER" id="PTHR43804:SF7">
    <property type="entry name" value="LD18447P"/>
    <property type="match status" value="1"/>
</dbReference>
<dbReference type="Pfam" id="PF03462">
    <property type="entry name" value="PCRF"/>
    <property type="match status" value="1"/>
</dbReference>
<dbReference type="Pfam" id="PF00472">
    <property type="entry name" value="RF-1"/>
    <property type="match status" value="1"/>
</dbReference>
<dbReference type="SMART" id="SM00937">
    <property type="entry name" value="PCRF"/>
    <property type="match status" value="1"/>
</dbReference>
<dbReference type="SUPFAM" id="SSF75620">
    <property type="entry name" value="Release factor"/>
    <property type="match status" value="1"/>
</dbReference>
<dbReference type="PROSITE" id="PS00745">
    <property type="entry name" value="RF_PROK_I"/>
    <property type="match status" value="1"/>
</dbReference>
<reference key="1">
    <citation type="journal article" date="2008" name="PLoS Genet.">
        <title>Complete genome sequence of the complex carbohydrate-degrading marine bacterium, Saccharophagus degradans strain 2-40 T.</title>
        <authorList>
            <person name="Weiner R.M."/>
            <person name="Taylor L.E. II"/>
            <person name="Henrissat B."/>
            <person name="Hauser L."/>
            <person name="Land M."/>
            <person name="Coutinho P.M."/>
            <person name="Rancurel C."/>
            <person name="Saunders E.H."/>
            <person name="Longmire A.G."/>
            <person name="Zhang H."/>
            <person name="Bayer E.A."/>
            <person name="Gilbert H.J."/>
            <person name="Larimer F."/>
            <person name="Zhulin I.B."/>
            <person name="Ekborg N.A."/>
            <person name="Lamed R."/>
            <person name="Richardson P.M."/>
            <person name="Borovok I."/>
            <person name="Hutcheson S."/>
        </authorList>
    </citation>
    <scope>NUCLEOTIDE SEQUENCE [LARGE SCALE GENOMIC DNA]</scope>
    <source>
        <strain>2-40 / ATCC 43961 / DSM 17024</strain>
    </source>
</reference>
<protein>
    <recommendedName>
        <fullName evidence="1">Peptide chain release factor 1</fullName>
        <shortName evidence="1">RF-1</shortName>
    </recommendedName>
</protein>
<accession>Q21FM3</accession>
<comment type="function">
    <text evidence="1">Peptide chain release factor 1 directs the termination of translation in response to the peptide chain termination codons UAG and UAA.</text>
</comment>
<comment type="subcellular location">
    <subcellularLocation>
        <location evidence="1">Cytoplasm</location>
    </subcellularLocation>
</comment>
<comment type="PTM">
    <text evidence="1">Methylated by PrmC. Methylation increases the termination efficiency of RF1.</text>
</comment>
<comment type="similarity">
    <text evidence="1">Belongs to the prokaryotic/mitochondrial release factor family.</text>
</comment>
<proteinExistence type="inferred from homology"/>
<evidence type="ECO:0000255" key="1">
    <source>
        <dbReference type="HAMAP-Rule" id="MF_00093"/>
    </source>
</evidence>
<name>RF1_SACD2</name>